<protein>
    <recommendedName>
        <fullName>Methyl-coenzyme M reductase II operon protein D</fullName>
    </recommendedName>
</protein>
<sequence>MEKMEKVEFIDVKVVPYRLLNPQTVETILNKIYDLDGIVRVLVHGPSIPKEIPYGPAKGIKVNHKDRQVIKVKGEEVELKVKVGEIIVGVLCDDKMDENIGKIEKIMDENLPCSYQMWVGTYTKRDVTVTDWMKYGPKFEKKLDPRYIGLVDPNSKVKENVKLIK</sequence>
<name>MCRW_METFV</name>
<accession>Q49172</accession>
<accession>E3GYZ9</accession>
<feature type="chain" id="PRO_0000147493" description="Methyl-coenzyme M reductase II operon protein D">
    <location>
        <begin position="1"/>
        <end position="165"/>
    </location>
</feature>
<organism>
    <name type="scientific">Methanothermus fervidus (strain ATCC 43054 / DSM 2088 / JCM 10308 / V24 S)</name>
    <dbReference type="NCBI Taxonomy" id="523846"/>
    <lineage>
        <taxon>Archaea</taxon>
        <taxon>Methanobacteriati</taxon>
        <taxon>Methanobacteriota</taxon>
        <taxon>Methanomada group</taxon>
        <taxon>Methanobacteria</taxon>
        <taxon>Methanobacteriales</taxon>
        <taxon>Methanothermaceae</taxon>
        <taxon>Methanothermus</taxon>
    </lineage>
</organism>
<evidence type="ECO:0000250" key="1"/>
<comment type="subunit">
    <text evidence="1">MCR is composed of three subunits: alpha, beta, and gamma. The function of protein D is not known (By similarity).</text>
</comment>
<proteinExistence type="inferred from homology"/>
<gene>
    <name type="primary">mrtD</name>
    <name type="synonym">mcrIID</name>
    <name type="ordered locus">Mfer_0732</name>
</gene>
<dbReference type="EMBL" id="X70765">
    <property type="protein sequence ID" value="CAA50042.1"/>
    <property type="molecule type" value="Genomic_DNA"/>
</dbReference>
<dbReference type="EMBL" id="CP002278">
    <property type="protein sequence ID" value="ADP77531.1"/>
    <property type="molecule type" value="Genomic_DNA"/>
</dbReference>
<dbReference type="PIR" id="S43898">
    <property type="entry name" value="S43898"/>
</dbReference>
<dbReference type="SMR" id="Q49172"/>
<dbReference type="STRING" id="523846.Mfer_0732"/>
<dbReference type="KEGG" id="mfv:Mfer_0732"/>
<dbReference type="HOGENOM" id="CLU_118415_0_0_2"/>
<dbReference type="OrthoDB" id="109281at2157"/>
<dbReference type="Proteomes" id="UP000002315">
    <property type="component" value="Chromosome"/>
</dbReference>
<dbReference type="GO" id="GO:0015948">
    <property type="term" value="P:methanogenesis"/>
    <property type="evidence" value="ECO:0007669"/>
    <property type="project" value="UniProtKB-KW"/>
</dbReference>
<dbReference type="InterPro" id="IPR003901">
    <property type="entry name" value="Me_CoM_Rdtase_D"/>
</dbReference>
<dbReference type="NCBIfam" id="TIGR03260">
    <property type="entry name" value="met_CoM_red_D"/>
    <property type="match status" value="1"/>
</dbReference>
<dbReference type="Pfam" id="PF02505">
    <property type="entry name" value="MCR_D"/>
    <property type="match status" value="1"/>
</dbReference>
<dbReference type="PIRSF" id="PIRSF005636">
    <property type="entry name" value="McrD"/>
    <property type="match status" value="1"/>
</dbReference>
<keyword id="KW-0484">Methanogenesis</keyword>
<keyword id="KW-1185">Reference proteome</keyword>
<reference key="1">
    <citation type="journal article" date="1994" name="Mol. Gen. Genet.">
        <title>Characterization and phylogeny of mcrII, a gene cluster encoding an isoenzyme of methyl coenzyme M reductase from hyperthermophilic Methanothermus fervidus.</title>
        <authorList>
            <person name="Lehmacher A."/>
            <person name="Klenk H.-P."/>
        </authorList>
    </citation>
    <scope>NUCLEOTIDE SEQUENCE [GENOMIC DNA]</scope>
    <source>
        <strain>ATCC 43054 / DSM 2088 / JCM 10308 / V24 S</strain>
    </source>
</reference>
<reference key="2">
    <citation type="journal article" date="2010" name="Stand. Genomic Sci.">
        <title>Complete genome sequence of Methanothermus fervidus type strain (V24S).</title>
        <authorList>
            <person name="Anderson I."/>
            <person name="Djao O.D."/>
            <person name="Misra M."/>
            <person name="Chertkov O."/>
            <person name="Nolan M."/>
            <person name="Lucas S."/>
            <person name="Lapidus A."/>
            <person name="Del Rio T.G."/>
            <person name="Tice H."/>
            <person name="Cheng J.F."/>
            <person name="Tapia R."/>
            <person name="Han C."/>
            <person name="Goodwin L."/>
            <person name="Pitluck S."/>
            <person name="Liolios K."/>
            <person name="Ivanova N."/>
            <person name="Mavromatis K."/>
            <person name="Mikhailova N."/>
            <person name="Pati A."/>
            <person name="Brambilla E."/>
            <person name="Chen A."/>
            <person name="Palaniappan K."/>
            <person name="Land M."/>
            <person name="Hauser L."/>
            <person name="Chang Y.J."/>
            <person name="Jeffries C.D."/>
            <person name="Sikorski J."/>
            <person name="Spring S."/>
            <person name="Rohde M."/>
            <person name="Eichinger K."/>
            <person name="Huber H."/>
            <person name="Wirth R."/>
            <person name="Goker M."/>
            <person name="Detter J.C."/>
            <person name="Woyke T."/>
            <person name="Bristow J."/>
            <person name="Eisen J.A."/>
            <person name="Markowitz V."/>
            <person name="Hugenholtz P."/>
            <person name="Klenk H.P."/>
            <person name="Kyrpides N.C."/>
        </authorList>
    </citation>
    <scope>NUCLEOTIDE SEQUENCE [LARGE SCALE GENOMIC DNA]</scope>
    <source>
        <strain>ATCC 43054 / DSM 2088 / JCM 10308 / V24 S</strain>
    </source>
</reference>